<gene>
    <name evidence="1" type="primary">pcp</name>
    <name type="ordered locus">glr2409</name>
</gene>
<accession>Q7NHX6</accession>
<reference key="1">
    <citation type="journal article" date="2003" name="DNA Res.">
        <title>Complete genome structure of Gloeobacter violaceus PCC 7421, a cyanobacterium that lacks thylakoids.</title>
        <authorList>
            <person name="Nakamura Y."/>
            <person name="Kaneko T."/>
            <person name="Sato S."/>
            <person name="Mimuro M."/>
            <person name="Miyashita H."/>
            <person name="Tsuchiya T."/>
            <person name="Sasamoto S."/>
            <person name="Watanabe A."/>
            <person name="Kawashima K."/>
            <person name="Kishida Y."/>
            <person name="Kiyokawa C."/>
            <person name="Kohara M."/>
            <person name="Matsumoto M."/>
            <person name="Matsuno A."/>
            <person name="Nakazaki N."/>
            <person name="Shimpo S."/>
            <person name="Takeuchi C."/>
            <person name="Yamada M."/>
            <person name="Tabata S."/>
        </authorList>
    </citation>
    <scope>NUCLEOTIDE SEQUENCE [LARGE SCALE GENOMIC DNA]</scope>
    <source>
        <strain>ATCC 29082 / PCC 7421</strain>
    </source>
</reference>
<protein>
    <recommendedName>
        <fullName evidence="1">Pyrrolidone-carboxylate peptidase</fullName>
        <ecNumber evidence="1">3.4.19.3</ecNumber>
    </recommendedName>
    <alternativeName>
        <fullName evidence="1">5-oxoprolyl-peptidase</fullName>
    </alternativeName>
    <alternativeName>
        <fullName evidence="1">Pyroglutamyl-peptidase I</fullName>
        <shortName evidence="1">PGP-I</shortName>
        <shortName evidence="1">Pyrase</shortName>
    </alternativeName>
</protein>
<sequence length="205" mass="22029">MRVLLTGFEPFAGELVNPSWEVASRLAERRISGCTVAAERLPTVFGASIACLRTALERHRPQAVVCLGEAGGRAAISIERVALNLDEARIPDNKGQQPVEIPVEPGAPAAYFATLPVRAIVAKLLAAGIPAEISRTAGGFVCNHTFYGLMHHLGQATPVRAGFIHIPYLPEQAVRYPGKASMELATTLRGIEMVLEVLRSEQNVL</sequence>
<comment type="function">
    <text evidence="1">Removes 5-oxoproline from various penultimate amino acid residues except L-proline.</text>
</comment>
<comment type="catalytic activity">
    <reaction evidence="1">
        <text>Release of an N-terminal pyroglutamyl group from a polypeptide, the second amino acid generally not being Pro.</text>
        <dbReference type="EC" id="3.4.19.3"/>
    </reaction>
</comment>
<comment type="subunit">
    <text evidence="1">Homotetramer.</text>
</comment>
<comment type="subcellular location">
    <subcellularLocation>
        <location evidence="1">Cytoplasm</location>
    </subcellularLocation>
</comment>
<comment type="similarity">
    <text evidence="1">Belongs to the peptidase C15 family.</text>
</comment>
<keyword id="KW-0963">Cytoplasm</keyword>
<keyword id="KW-0378">Hydrolase</keyword>
<keyword id="KW-0645">Protease</keyword>
<keyword id="KW-1185">Reference proteome</keyword>
<keyword id="KW-0788">Thiol protease</keyword>
<name>PCP_GLOVI</name>
<dbReference type="EC" id="3.4.19.3" evidence="1"/>
<dbReference type="EMBL" id="BA000045">
    <property type="protein sequence ID" value="BAC90350.1"/>
    <property type="molecule type" value="Genomic_DNA"/>
</dbReference>
<dbReference type="RefSeq" id="NP_925355.1">
    <property type="nucleotide sequence ID" value="NC_005125.1"/>
</dbReference>
<dbReference type="RefSeq" id="WP_011142404.1">
    <property type="nucleotide sequence ID" value="NC_005125.1"/>
</dbReference>
<dbReference type="SMR" id="Q7NHX6"/>
<dbReference type="FunCoup" id="Q7NHX6">
    <property type="interactions" value="12"/>
</dbReference>
<dbReference type="STRING" id="251221.gene:10759906"/>
<dbReference type="MEROPS" id="C15.001"/>
<dbReference type="EnsemblBacteria" id="BAC90350">
    <property type="protein sequence ID" value="BAC90350"/>
    <property type="gene ID" value="BAC90350"/>
</dbReference>
<dbReference type="KEGG" id="gvi:glr2409"/>
<dbReference type="PATRIC" id="fig|251221.4.peg.2448"/>
<dbReference type="eggNOG" id="COG2039">
    <property type="taxonomic scope" value="Bacteria"/>
</dbReference>
<dbReference type="HOGENOM" id="CLU_043960_4_0_3"/>
<dbReference type="InParanoid" id="Q7NHX6"/>
<dbReference type="OrthoDB" id="9779738at2"/>
<dbReference type="Proteomes" id="UP000000557">
    <property type="component" value="Chromosome"/>
</dbReference>
<dbReference type="GO" id="GO:0005829">
    <property type="term" value="C:cytosol"/>
    <property type="evidence" value="ECO:0007669"/>
    <property type="project" value="InterPro"/>
</dbReference>
<dbReference type="GO" id="GO:0016920">
    <property type="term" value="F:pyroglutamyl-peptidase activity"/>
    <property type="evidence" value="ECO:0007669"/>
    <property type="project" value="UniProtKB-UniRule"/>
</dbReference>
<dbReference type="GO" id="GO:0006508">
    <property type="term" value="P:proteolysis"/>
    <property type="evidence" value="ECO:0007669"/>
    <property type="project" value="UniProtKB-KW"/>
</dbReference>
<dbReference type="CDD" id="cd00501">
    <property type="entry name" value="Peptidase_C15"/>
    <property type="match status" value="1"/>
</dbReference>
<dbReference type="FunFam" id="3.40.630.20:FF:000001">
    <property type="entry name" value="Pyrrolidone-carboxylate peptidase"/>
    <property type="match status" value="1"/>
</dbReference>
<dbReference type="Gene3D" id="3.40.630.20">
    <property type="entry name" value="Peptidase C15, pyroglutamyl peptidase I-like"/>
    <property type="match status" value="1"/>
</dbReference>
<dbReference type="HAMAP" id="MF_00417">
    <property type="entry name" value="Pyrrolid_peptidase"/>
    <property type="match status" value="1"/>
</dbReference>
<dbReference type="InterPro" id="IPR000816">
    <property type="entry name" value="Peptidase_C15"/>
</dbReference>
<dbReference type="InterPro" id="IPR016125">
    <property type="entry name" value="Peptidase_C15-like"/>
</dbReference>
<dbReference type="InterPro" id="IPR036440">
    <property type="entry name" value="Peptidase_C15-like_sf"/>
</dbReference>
<dbReference type="InterPro" id="IPR029762">
    <property type="entry name" value="PGP-I_bact-type"/>
</dbReference>
<dbReference type="InterPro" id="IPR033694">
    <property type="entry name" value="PGPEP1_Cys_AS"/>
</dbReference>
<dbReference type="InterPro" id="IPR033693">
    <property type="entry name" value="PGPEP1_Glu_AS"/>
</dbReference>
<dbReference type="NCBIfam" id="NF009676">
    <property type="entry name" value="PRK13197.1"/>
    <property type="match status" value="1"/>
</dbReference>
<dbReference type="NCBIfam" id="TIGR00504">
    <property type="entry name" value="pyro_pdase"/>
    <property type="match status" value="1"/>
</dbReference>
<dbReference type="PANTHER" id="PTHR23402">
    <property type="entry name" value="PROTEASE FAMILY C15 PYROGLUTAMYL-PEPTIDASE I-RELATED"/>
    <property type="match status" value="1"/>
</dbReference>
<dbReference type="PANTHER" id="PTHR23402:SF1">
    <property type="entry name" value="PYROGLUTAMYL-PEPTIDASE I"/>
    <property type="match status" value="1"/>
</dbReference>
<dbReference type="Pfam" id="PF01470">
    <property type="entry name" value="Peptidase_C15"/>
    <property type="match status" value="1"/>
</dbReference>
<dbReference type="PIRSF" id="PIRSF015592">
    <property type="entry name" value="Prld-crbxl_pptds"/>
    <property type="match status" value="1"/>
</dbReference>
<dbReference type="PRINTS" id="PR00706">
    <property type="entry name" value="PYROGLUPTASE"/>
</dbReference>
<dbReference type="SUPFAM" id="SSF53182">
    <property type="entry name" value="Pyrrolidone carboxyl peptidase (pyroglutamate aminopeptidase)"/>
    <property type="match status" value="1"/>
</dbReference>
<dbReference type="PROSITE" id="PS01334">
    <property type="entry name" value="PYRASE_CYS"/>
    <property type="match status" value="1"/>
</dbReference>
<dbReference type="PROSITE" id="PS01333">
    <property type="entry name" value="PYRASE_GLU"/>
    <property type="match status" value="1"/>
</dbReference>
<organism>
    <name type="scientific">Gloeobacter violaceus (strain ATCC 29082 / PCC 7421)</name>
    <dbReference type="NCBI Taxonomy" id="251221"/>
    <lineage>
        <taxon>Bacteria</taxon>
        <taxon>Bacillati</taxon>
        <taxon>Cyanobacteriota</taxon>
        <taxon>Cyanophyceae</taxon>
        <taxon>Gloeobacterales</taxon>
        <taxon>Gloeobacteraceae</taxon>
        <taxon>Gloeobacter</taxon>
    </lineage>
</organism>
<feature type="chain" id="PRO_0000184720" description="Pyrrolidone-carboxylate peptidase">
    <location>
        <begin position="1"/>
        <end position="205"/>
    </location>
</feature>
<feature type="active site" evidence="1">
    <location>
        <position position="79"/>
    </location>
</feature>
<feature type="active site" evidence="1">
    <location>
        <position position="142"/>
    </location>
</feature>
<feature type="active site" evidence="1">
    <location>
        <position position="165"/>
    </location>
</feature>
<evidence type="ECO:0000255" key="1">
    <source>
        <dbReference type="HAMAP-Rule" id="MF_00417"/>
    </source>
</evidence>
<proteinExistence type="inferred from homology"/>